<protein>
    <recommendedName>
        <fullName evidence="1">3-hydroxydecanoyl-[acyl-carrier-protein] dehydratase</fullName>
        <ecNumber evidence="1">4.2.1.59</ecNumber>
    </recommendedName>
    <alternativeName>
        <fullName evidence="1">3-hydroxyacyl-[acyl-carrier-protein] dehydratase FabA</fullName>
    </alternativeName>
    <alternativeName>
        <fullName evidence="1">Beta-hydroxydecanoyl thioester dehydrase</fullName>
    </alternativeName>
    <alternativeName>
        <fullName evidence="1">Trans-2-decenoyl-[acyl-carrier-protein] isomerase</fullName>
        <ecNumber evidence="1">5.3.3.14</ecNumber>
    </alternativeName>
</protein>
<keyword id="KW-0963">Cytoplasm</keyword>
<keyword id="KW-0275">Fatty acid biosynthesis</keyword>
<keyword id="KW-0276">Fatty acid metabolism</keyword>
<keyword id="KW-0413">Isomerase</keyword>
<keyword id="KW-0444">Lipid biosynthesis</keyword>
<keyword id="KW-0443">Lipid metabolism</keyword>
<keyword id="KW-0456">Lyase</keyword>
<accession>Q0I3F9</accession>
<dbReference type="EC" id="4.2.1.59" evidence="1"/>
<dbReference type="EC" id="5.3.3.14" evidence="1"/>
<dbReference type="EMBL" id="CP000436">
    <property type="protein sequence ID" value="ABI25182.1"/>
    <property type="status" value="ALT_INIT"/>
    <property type="molecule type" value="Genomic_DNA"/>
</dbReference>
<dbReference type="SMR" id="Q0I3F9"/>
<dbReference type="KEGG" id="hso:HS_0907"/>
<dbReference type="eggNOG" id="COG0764">
    <property type="taxonomic scope" value="Bacteria"/>
</dbReference>
<dbReference type="HOGENOM" id="CLU_097925_0_0_6"/>
<dbReference type="UniPathway" id="UPA00094"/>
<dbReference type="GO" id="GO:0005737">
    <property type="term" value="C:cytoplasm"/>
    <property type="evidence" value="ECO:0007669"/>
    <property type="project" value="UniProtKB-SubCell"/>
</dbReference>
<dbReference type="GO" id="GO:0019171">
    <property type="term" value="F:(3R)-hydroxyacyl-[acyl-carrier-protein] dehydratase activity"/>
    <property type="evidence" value="ECO:0007669"/>
    <property type="project" value="UniProtKB-UniRule"/>
</dbReference>
<dbReference type="GO" id="GO:0034017">
    <property type="term" value="F:trans-2-decenoyl-acyl-carrier-protein isomerase activity"/>
    <property type="evidence" value="ECO:0007669"/>
    <property type="project" value="UniProtKB-UniRule"/>
</dbReference>
<dbReference type="GO" id="GO:0006636">
    <property type="term" value="P:unsaturated fatty acid biosynthetic process"/>
    <property type="evidence" value="ECO:0007669"/>
    <property type="project" value="UniProtKB-UniRule"/>
</dbReference>
<dbReference type="CDD" id="cd01287">
    <property type="entry name" value="FabA"/>
    <property type="match status" value="1"/>
</dbReference>
<dbReference type="FunFam" id="3.10.129.10:FF:000003">
    <property type="entry name" value="3-hydroxydecanoyl-[acyl-carrier-protein] dehydratase"/>
    <property type="match status" value="1"/>
</dbReference>
<dbReference type="Gene3D" id="3.10.129.10">
    <property type="entry name" value="Hotdog Thioesterase"/>
    <property type="match status" value="1"/>
</dbReference>
<dbReference type="HAMAP" id="MF_00405">
    <property type="entry name" value="FabA"/>
    <property type="match status" value="1"/>
</dbReference>
<dbReference type="InterPro" id="IPR010083">
    <property type="entry name" value="FabA"/>
</dbReference>
<dbReference type="InterPro" id="IPR013114">
    <property type="entry name" value="FabA_FabZ"/>
</dbReference>
<dbReference type="InterPro" id="IPR029069">
    <property type="entry name" value="HotDog_dom_sf"/>
</dbReference>
<dbReference type="NCBIfam" id="TIGR01749">
    <property type="entry name" value="fabA"/>
    <property type="match status" value="1"/>
</dbReference>
<dbReference type="NCBIfam" id="NF003509">
    <property type="entry name" value="PRK05174.1"/>
    <property type="match status" value="1"/>
</dbReference>
<dbReference type="PANTHER" id="PTHR30272">
    <property type="entry name" value="3-HYDROXYACYL-[ACYL-CARRIER-PROTEIN] DEHYDRATASE"/>
    <property type="match status" value="1"/>
</dbReference>
<dbReference type="PANTHER" id="PTHR30272:SF8">
    <property type="entry name" value="3-HYDROXYDECANOYL-[ACYL-CARRIER-PROTEIN] DEHYDRATASE"/>
    <property type="match status" value="1"/>
</dbReference>
<dbReference type="Pfam" id="PF07977">
    <property type="entry name" value="FabA"/>
    <property type="match status" value="1"/>
</dbReference>
<dbReference type="SUPFAM" id="SSF54637">
    <property type="entry name" value="Thioesterase/thiol ester dehydrase-isomerase"/>
    <property type="match status" value="1"/>
</dbReference>
<organism>
    <name type="scientific">Histophilus somni (strain 129Pt)</name>
    <name type="common">Haemophilus somnus</name>
    <dbReference type="NCBI Taxonomy" id="205914"/>
    <lineage>
        <taxon>Bacteria</taxon>
        <taxon>Pseudomonadati</taxon>
        <taxon>Pseudomonadota</taxon>
        <taxon>Gammaproteobacteria</taxon>
        <taxon>Pasteurellales</taxon>
        <taxon>Pasteurellaceae</taxon>
        <taxon>Histophilus</taxon>
    </lineage>
</organism>
<gene>
    <name evidence="1" type="primary">fabA</name>
    <name type="ordered locus">HS_0907</name>
</gene>
<feature type="chain" id="PRO_0000267730" description="3-hydroxydecanoyl-[acyl-carrier-protein] dehydratase">
    <location>
        <begin position="1"/>
        <end position="171"/>
    </location>
</feature>
<feature type="active site" evidence="1">
    <location>
        <position position="70"/>
    </location>
</feature>
<proteinExistence type="inferred from homology"/>
<evidence type="ECO:0000255" key="1">
    <source>
        <dbReference type="HAMAP-Rule" id="MF_00405"/>
    </source>
</evidence>
<evidence type="ECO:0000305" key="2"/>
<sequence>MNKKNSYSYEDLLASGRGELFGEKGPQLPAPSMLMMDRVVEMNEEGGLFNKGYVEAELDINPSLSFFGCHFIGDPVMPGCLGLDAMWQLVGFYLGWIGGQGKGRALGVGEVKFTGQILPTAKKVIYRINMKRVINRKLVMGMADGEVEVDGKVIYTATDLKVGLFQDTSTF</sequence>
<comment type="function">
    <text evidence="1">Necessary for the introduction of cis unsaturation into fatty acids. Catalyzes the dehydration of (3R)-3-hydroxydecanoyl-ACP to E-(2)-decenoyl-ACP and then its isomerization to Z-(3)-decenoyl-ACP. Can catalyze the dehydratase reaction for beta-hydroxyacyl-ACPs with saturated chain lengths up to 16:0, being most active on intermediate chain length.</text>
</comment>
<comment type="catalytic activity">
    <reaction evidence="1">
        <text>a (3R)-hydroxyacyl-[ACP] = a (2E)-enoyl-[ACP] + H2O</text>
        <dbReference type="Rhea" id="RHEA:13097"/>
        <dbReference type="Rhea" id="RHEA-COMP:9925"/>
        <dbReference type="Rhea" id="RHEA-COMP:9945"/>
        <dbReference type="ChEBI" id="CHEBI:15377"/>
        <dbReference type="ChEBI" id="CHEBI:78784"/>
        <dbReference type="ChEBI" id="CHEBI:78827"/>
        <dbReference type="EC" id="4.2.1.59"/>
    </reaction>
</comment>
<comment type="catalytic activity">
    <reaction evidence="1">
        <text>(3R)-hydroxydecanoyl-[ACP] = (2E)-decenoyl-[ACP] + H2O</text>
        <dbReference type="Rhea" id="RHEA:41860"/>
        <dbReference type="Rhea" id="RHEA-COMP:9638"/>
        <dbReference type="Rhea" id="RHEA-COMP:9639"/>
        <dbReference type="ChEBI" id="CHEBI:15377"/>
        <dbReference type="ChEBI" id="CHEBI:78466"/>
        <dbReference type="ChEBI" id="CHEBI:78467"/>
    </reaction>
</comment>
<comment type="catalytic activity">
    <reaction evidence="1">
        <text>(2E)-decenoyl-[ACP] = (3Z)-decenoyl-[ACP]</text>
        <dbReference type="Rhea" id="RHEA:23568"/>
        <dbReference type="Rhea" id="RHEA-COMP:9639"/>
        <dbReference type="Rhea" id="RHEA-COMP:9927"/>
        <dbReference type="ChEBI" id="CHEBI:78467"/>
        <dbReference type="ChEBI" id="CHEBI:78798"/>
        <dbReference type="EC" id="5.3.3.14"/>
    </reaction>
</comment>
<comment type="pathway">
    <text evidence="1">Lipid metabolism; fatty acid biosynthesis.</text>
</comment>
<comment type="subunit">
    <text evidence="1">Homodimer.</text>
</comment>
<comment type="subcellular location">
    <subcellularLocation>
        <location evidence="1">Cytoplasm</location>
    </subcellularLocation>
</comment>
<comment type="similarity">
    <text evidence="1">Belongs to the thioester dehydratase family. FabA subfamily.</text>
</comment>
<comment type="sequence caution" evidence="2">
    <conflict type="erroneous initiation">
        <sequence resource="EMBL-CDS" id="ABI25182"/>
    </conflict>
</comment>
<name>FABA_HISS1</name>
<reference key="1">
    <citation type="journal article" date="2007" name="J. Bacteriol.">
        <title>Complete genome sequence of Haemophilus somnus (Histophilus somni) strain 129Pt and comparison to Haemophilus ducreyi 35000HP and Haemophilus influenzae Rd.</title>
        <authorList>
            <person name="Challacombe J.F."/>
            <person name="Duncan A.J."/>
            <person name="Brettin T.S."/>
            <person name="Bruce D."/>
            <person name="Chertkov O."/>
            <person name="Detter J.C."/>
            <person name="Han C.S."/>
            <person name="Misra M."/>
            <person name="Richardson P."/>
            <person name="Tapia R."/>
            <person name="Thayer N."/>
            <person name="Xie G."/>
            <person name="Inzana T.J."/>
        </authorList>
    </citation>
    <scope>NUCLEOTIDE SEQUENCE [LARGE SCALE GENOMIC DNA]</scope>
    <source>
        <strain>129Pt</strain>
    </source>
</reference>